<dbReference type="EMBL" id="AE007870">
    <property type="protein sequence ID" value="AAK89364.1"/>
    <property type="molecule type" value="Genomic_DNA"/>
</dbReference>
<dbReference type="PIR" id="AC3056">
    <property type="entry name" value="AC3056"/>
</dbReference>
<dbReference type="PIR" id="B98230">
    <property type="entry name" value="B98230"/>
</dbReference>
<dbReference type="RefSeq" id="NP_356579.1">
    <property type="nucleotide sequence ID" value="NC_003063.2"/>
</dbReference>
<dbReference type="RefSeq" id="WP_006313768.1">
    <property type="nucleotide sequence ID" value="NC_003063.2"/>
</dbReference>
<dbReference type="SMR" id="Q8U8M6"/>
<dbReference type="STRING" id="176299.Atu4064"/>
<dbReference type="EnsemblBacteria" id="AAK89364">
    <property type="protein sequence ID" value="AAK89364"/>
    <property type="gene ID" value="Atu4064"/>
</dbReference>
<dbReference type="GeneID" id="1135938"/>
<dbReference type="KEGG" id="atu:Atu4064"/>
<dbReference type="PATRIC" id="fig|176299.10.peg.3882"/>
<dbReference type="eggNOG" id="COG0828">
    <property type="taxonomic scope" value="Bacteria"/>
</dbReference>
<dbReference type="HOGENOM" id="CLU_159258_0_1_5"/>
<dbReference type="OrthoDB" id="9811907at2"/>
<dbReference type="PhylomeDB" id="Q8U8M6"/>
<dbReference type="BioCyc" id="AGRO:ATU4064-MONOMER"/>
<dbReference type="Proteomes" id="UP000000813">
    <property type="component" value="Chromosome linear"/>
</dbReference>
<dbReference type="GO" id="GO:1990904">
    <property type="term" value="C:ribonucleoprotein complex"/>
    <property type="evidence" value="ECO:0007669"/>
    <property type="project" value="UniProtKB-KW"/>
</dbReference>
<dbReference type="GO" id="GO:0005840">
    <property type="term" value="C:ribosome"/>
    <property type="evidence" value="ECO:0007669"/>
    <property type="project" value="UniProtKB-KW"/>
</dbReference>
<dbReference type="GO" id="GO:0003735">
    <property type="term" value="F:structural constituent of ribosome"/>
    <property type="evidence" value="ECO:0007669"/>
    <property type="project" value="InterPro"/>
</dbReference>
<dbReference type="GO" id="GO:0006412">
    <property type="term" value="P:translation"/>
    <property type="evidence" value="ECO:0007669"/>
    <property type="project" value="UniProtKB-UniRule"/>
</dbReference>
<dbReference type="Gene3D" id="1.20.5.1150">
    <property type="entry name" value="Ribosomal protein S8"/>
    <property type="match status" value="1"/>
</dbReference>
<dbReference type="HAMAP" id="MF_00358">
    <property type="entry name" value="Ribosomal_bS21"/>
    <property type="match status" value="1"/>
</dbReference>
<dbReference type="InterPro" id="IPR001911">
    <property type="entry name" value="Ribosomal_bS21"/>
</dbReference>
<dbReference type="InterPro" id="IPR018278">
    <property type="entry name" value="Ribosomal_bS21_CS"/>
</dbReference>
<dbReference type="InterPro" id="IPR038380">
    <property type="entry name" value="Ribosomal_bS21_sf"/>
</dbReference>
<dbReference type="NCBIfam" id="TIGR00030">
    <property type="entry name" value="S21p"/>
    <property type="match status" value="1"/>
</dbReference>
<dbReference type="PANTHER" id="PTHR21109">
    <property type="entry name" value="MITOCHONDRIAL 28S RIBOSOMAL PROTEIN S21"/>
    <property type="match status" value="1"/>
</dbReference>
<dbReference type="PANTHER" id="PTHR21109:SF0">
    <property type="entry name" value="SMALL RIBOSOMAL SUBUNIT PROTEIN BS21M"/>
    <property type="match status" value="1"/>
</dbReference>
<dbReference type="Pfam" id="PF01165">
    <property type="entry name" value="Ribosomal_S21"/>
    <property type="match status" value="1"/>
</dbReference>
<dbReference type="PRINTS" id="PR00976">
    <property type="entry name" value="RIBOSOMALS21"/>
</dbReference>
<dbReference type="PROSITE" id="PS01181">
    <property type="entry name" value="RIBOSOMAL_S21"/>
    <property type="match status" value="1"/>
</dbReference>
<accession>Q8U8M6</accession>
<name>RS21A_AGRFC</name>
<gene>
    <name type="primary">rpsU1</name>
    <name type="ordered locus">Atu4064</name>
    <name type="ORF">AGR_L_1581</name>
</gene>
<feature type="chain" id="PRO_0000178283" description="Small ribosomal subunit protein bS21A">
    <location>
        <begin position="1"/>
        <end position="75"/>
    </location>
</feature>
<protein>
    <recommendedName>
        <fullName evidence="1">Small ribosomal subunit protein bS21A</fullName>
    </recommendedName>
    <alternativeName>
        <fullName evidence="2">30S ribosomal protein S21 1</fullName>
    </alternativeName>
</protein>
<reference key="1">
    <citation type="journal article" date="2001" name="Science">
        <title>The genome of the natural genetic engineer Agrobacterium tumefaciens C58.</title>
        <authorList>
            <person name="Wood D.W."/>
            <person name="Setubal J.C."/>
            <person name="Kaul R."/>
            <person name="Monks D.E."/>
            <person name="Kitajima J.P."/>
            <person name="Okura V.K."/>
            <person name="Zhou Y."/>
            <person name="Chen L."/>
            <person name="Wood G.E."/>
            <person name="Almeida N.F. Jr."/>
            <person name="Woo L."/>
            <person name="Chen Y."/>
            <person name="Paulsen I.T."/>
            <person name="Eisen J.A."/>
            <person name="Karp P.D."/>
            <person name="Bovee D. Sr."/>
            <person name="Chapman P."/>
            <person name="Clendenning J."/>
            <person name="Deatherage G."/>
            <person name="Gillet W."/>
            <person name="Grant C."/>
            <person name="Kutyavin T."/>
            <person name="Levy R."/>
            <person name="Li M.-J."/>
            <person name="McClelland E."/>
            <person name="Palmieri A."/>
            <person name="Raymond C."/>
            <person name="Rouse G."/>
            <person name="Saenphimmachak C."/>
            <person name="Wu Z."/>
            <person name="Romero P."/>
            <person name="Gordon D."/>
            <person name="Zhang S."/>
            <person name="Yoo H."/>
            <person name="Tao Y."/>
            <person name="Biddle P."/>
            <person name="Jung M."/>
            <person name="Krespan W."/>
            <person name="Perry M."/>
            <person name="Gordon-Kamm B."/>
            <person name="Liao L."/>
            <person name="Kim S."/>
            <person name="Hendrick C."/>
            <person name="Zhao Z.-Y."/>
            <person name="Dolan M."/>
            <person name="Chumley F."/>
            <person name="Tingey S.V."/>
            <person name="Tomb J.-F."/>
            <person name="Gordon M.P."/>
            <person name="Olson M.V."/>
            <person name="Nester E.W."/>
        </authorList>
    </citation>
    <scope>NUCLEOTIDE SEQUENCE [LARGE SCALE GENOMIC DNA]</scope>
    <source>
        <strain>C58 / ATCC 33970</strain>
    </source>
</reference>
<reference key="2">
    <citation type="journal article" date="2001" name="Science">
        <title>Genome sequence of the plant pathogen and biotechnology agent Agrobacterium tumefaciens C58.</title>
        <authorList>
            <person name="Goodner B."/>
            <person name="Hinkle G."/>
            <person name="Gattung S."/>
            <person name="Miller N."/>
            <person name="Blanchard M."/>
            <person name="Qurollo B."/>
            <person name="Goldman B.S."/>
            <person name="Cao Y."/>
            <person name="Askenazi M."/>
            <person name="Halling C."/>
            <person name="Mullin L."/>
            <person name="Houmiel K."/>
            <person name="Gordon J."/>
            <person name="Vaudin M."/>
            <person name="Iartchouk O."/>
            <person name="Epp A."/>
            <person name="Liu F."/>
            <person name="Wollam C."/>
            <person name="Allinger M."/>
            <person name="Doughty D."/>
            <person name="Scott C."/>
            <person name="Lappas C."/>
            <person name="Markelz B."/>
            <person name="Flanagan C."/>
            <person name="Crowell C."/>
            <person name="Gurson J."/>
            <person name="Lomo C."/>
            <person name="Sear C."/>
            <person name="Strub G."/>
            <person name="Cielo C."/>
            <person name="Slater S."/>
        </authorList>
    </citation>
    <scope>NUCLEOTIDE SEQUENCE [LARGE SCALE GENOMIC DNA]</scope>
    <source>
        <strain>C58 / ATCC 33970</strain>
    </source>
</reference>
<sequence>MQVLVRDNNVDQALRALKKKMQREGIFREMKMRDYYEKPSQKRAREKAEAVRRVRKLARKRAQREGLIAAPRASR</sequence>
<comment type="similarity">
    <text evidence="2">Belongs to the bacterial ribosomal protein bS21 family.</text>
</comment>
<evidence type="ECO:0000255" key="1">
    <source>
        <dbReference type="HAMAP-Rule" id="MF_00358"/>
    </source>
</evidence>
<evidence type="ECO:0000305" key="2"/>
<proteinExistence type="inferred from homology"/>
<keyword id="KW-1185">Reference proteome</keyword>
<keyword id="KW-0687">Ribonucleoprotein</keyword>
<keyword id="KW-0689">Ribosomal protein</keyword>
<organism>
    <name type="scientific">Agrobacterium fabrum (strain C58 / ATCC 33970)</name>
    <name type="common">Agrobacterium tumefaciens (strain C58)</name>
    <dbReference type="NCBI Taxonomy" id="176299"/>
    <lineage>
        <taxon>Bacteria</taxon>
        <taxon>Pseudomonadati</taxon>
        <taxon>Pseudomonadota</taxon>
        <taxon>Alphaproteobacteria</taxon>
        <taxon>Hyphomicrobiales</taxon>
        <taxon>Rhizobiaceae</taxon>
        <taxon>Rhizobium/Agrobacterium group</taxon>
        <taxon>Agrobacterium</taxon>
        <taxon>Agrobacterium tumefaciens complex</taxon>
    </lineage>
</organism>